<sequence>MSTHLFTSESVSEGHPDKIADQISDAVLDEILKQDPKARVACETYVKTGMALVGGEITTSAWVDIENLTRQVICDIGYKHSDMGFDGHSCAVLNAIGKQSQDINQGVDRENPLDQGAGDQGIMFGYATNETEVFMPAPITYAHRLMERQAKVRKDGTLDWLRPDAKSQLTFKYEDNKIVGIDAVVLSTQHAESVSQKEVHEGVMEEIIKPVLPAKWLDKDTKYFINPTGRFVIGGPMGDCGLTGRKIIVDTYGGAARHGGGAFSGKDPSKVDRSAAYAARYVAKNIVAAGLADRCEIQLSYAIGVAEPTSIMLETFGTGKVANELLVKLVREFFDLRPYGLIQMLDLIRPIYRETAAYGHFGREQFPWEKIDRAAELSAAAGL</sequence>
<name>METK_ACTSZ</name>
<gene>
    <name evidence="1" type="primary">metK</name>
    <name type="ordered locus">Asuc_0835</name>
</gene>
<comment type="function">
    <text evidence="1">Catalyzes the formation of S-adenosylmethionine (AdoMet) from methionine and ATP. The overall synthetic reaction is composed of two sequential steps, AdoMet formation and the subsequent tripolyphosphate hydrolysis which occurs prior to release of AdoMet from the enzyme.</text>
</comment>
<comment type="catalytic activity">
    <reaction evidence="1">
        <text>L-methionine + ATP + H2O = S-adenosyl-L-methionine + phosphate + diphosphate</text>
        <dbReference type="Rhea" id="RHEA:21080"/>
        <dbReference type="ChEBI" id="CHEBI:15377"/>
        <dbReference type="ChEBI" id="CHEBI:30616"/>
        <dbReference type="ChEBI" id="CHEBI:33019"/>
        <dbReference type="ChEBI" id="CHEBI:43474"/>
        <dbReference type="ChEBI" id="CHEBI:57844"/>
        <dbReference type="ChEBI" id="CHEBI:59789"/>
        <dbReference type="EC" id="2.5.1.6"/>
    </reaction>
</comment>
<comment type="cofactor">
    <cofactor evidence="1">
        <name>Mg(2+)</name>
        <dbReference type="ChEBI" id="CHEBI:18420"/>
    </cofactor>
    <text evidence="1">Binds 2 divalent ions per subunit.</text>
</comment>
<comment type="cofactor">
    <cofactor evidence="1">
        <name>K(+)</name>
        <dbReference type="ChEBI" id="CHEBI:29103"/>
    </cofactor>
    <text evidence="1">Binds 1 potassium ion per subunit.</text>
</comment>
<comment type="pathway">
    <text evidence="1">Amino-acid biosynthesis; S-adenosyl-L-methionine biosynthesis; S-adenosyl-L-methionine from L-methionine: step 1/1.</text>
</comment>
<comment type="subunit">
    <text evidence="1">Homotetramer; dimer of dimers.</text>
</comment>
<comment type="subcellular location">
    <subcellularLocation>
        <location evidence="1">Cytoplasm</location>
    </subcellularLocation>
</comment>
<comment type="similarity">
    <text evidence="1">Belongs to the AdoMet synthase family.</text>
</comment>
<reference key="1">
    <citation type="journal article" date="2010" name="BMC Genomics">
        <title>A genomic perspective on the potential of Actinobacillus succinogenes for industrial succinate production.</title>
        <authorList>
            <person name="McKinlay J.B."/>
            <person name="Laivenieks M."/>
            <person name="Schindler B.D."/>
            <person name="McKinlay A.A."/>
            <person name="Siddaramappa S."/>
            <person name="Challacombe J.F."/>
            <person name="Lowry S.R."/>
            <person name="Clum A."/>
            <person name="Lapidus A.L."/>
            <person name="Burkhart K.B."/>
            <person name="Harkins V."/>
            <person name="Vieille C."/>
        </authorList>
    </citation>
    <scope>NUCLEOTIDE SEQUENCE [LARGE SCALE GENOMIC DNA]</scope>
    <source>
        <strain>ATCC 55618 / DSM 22257 / CCUG 43843 / 130Z</strain>
    </source>
</reference>
<evidence type="ECO:0000255" key="1">
    <source>
        <dbReference type="HAMAP-Rule" id="MF_00086"/>
    </source>
</evidence>
<keyword id="KW-0067">ATP-binding</keyword>
<keyword id="KW-0963">Cytoplasm</keyword>
<keyword id="KW-0460">Magnesium</keyword>
<keyword id="KW-0479">Metal-binding</keyword>
<keyword id="KW-0547">Nucleotide-binding</keyword>
<keyword id="KW-0554">One-carbon metabolism</keyword>
<keyword id="KW-0630">Potassium</keyword>
<keyword id="KW-1185">Reference proteome</keyword>
<keyword id="KW-0808">Transferase</keyword>
<protein>
    <recommendedName>
        <fullName evidence="1">S-adenosylmethionine synthase</fullName>
        <shortName evidence="1">AdoMet synthase</shortName>
        <ecNumber evidence="1">2.5.1.6</ecNumber>
    </recommendedName>
    <alternativeName>
        <fullName evidence="1">MAT</fullName>
    </alternativeName>
    <alternativeName>
        <fullName evidence="1">Methionine adenosyltransferase</fullName>
    </alternativeName>
</protein>
<feature type="chain" id="PRO_1000071236" description="S-adenosylmethionine synthase">
    <location>
        <begin position="1"/>
        <end position="383"/>
    </location>
</feature>
<feature type="region of interest" description="Flexible loop" evidence="1">
    <location>
        <begin position="99"/>
        <end position="109"/>
    </location>
</feature>
<feature type="binding site" description="in other chain" evidence="1">
    <location>
        <position position="15"/>
    </location>
    <ligand>
        <name>ATP</name>
        <dbReference type="ChEBI" id="CHEBI:30616"/>
        <note>ligand shared between two neighboring subunits</note>
    </ligand>
</feature>
<feature type="binding site" evidence="1">
    <location>
        <position position="17"/>
    </location>
    <ligand>
        <name>Mg(2+)</name>
        <dbReference type="ChEBI" id="CHEBI:18420"/>
    </ligand>
</feature>
<feature type="binding site" evidence="1">
    <location>
        <position position="43"/>
    </location>
    <ligand>
        <name>K(+)</name>
        <dbReference type="ChEBI" id="CHEBI:29103"/>
    </ligand>
</feature>
<feature type="binding site" description="in other chain" evidence="1">
    <location>
        <position position="56"/>
    </location>
    <ligand>
        <name>L-methionine</name>
        <dbReference type="ChEBI" id="CHEBI:57844"/>
        <note>ligand shared between two neighboring subunits</note>
    </ligand>
</feature>
<feature type="binding site" description="in other chain" evidence="1">
    <location>
        <position position="99"/>
    </location>
    <ligand>
        <name>L-methionine</name>
        <dbReference type="ChEBI" id="CHEBI:57844"/>
        <note>ligand shared between two neighboring subunits</note>
    </ligand>
</feature>
<feature type="binding site" description="in other chain" evidence="1">
    <location>
        <begin position="164"/>
        <end position="166"/>
    </location>
    <ligand>
        <name>ATP</name>
        <dbReference type="ChEBI" id="CHEBI:30616"/>
        <note>ligand shared between two neighboring subunits</note>
    </ligand>
</feature>
<feature type="binding site" description="in other chain" evidence="1">
    <location>
        <begin position="230"/>
        <end position="231"/>
    </location>
    <ligand>
        <name>ATP</name>
        <dbReference type="ChEBI" id="CHEBI:30616"/>
        <note>ligand shared between two neighboring subunits</note>
    </ligand>
</feature>
<feature type="binding site" evidence="1">
    <location>
        <position position="239"/>
    </location>
    <ligand>
        <name>ATP</name>
        <dbReference type="ChEBI" id="CHEBI:30616"/>
        <note>ligand shared between two neighboring subunits</note>
    </ligand>
</feature>
<feature type="binding site" evidence="1">
    <location>
        <position position="239"/>
    </location>
    <ligand>
        <name>L-methionine</name>
        <dbReference type="ChEBI" id="CHEBI:57844"/>
        <note>ligand shared between two neighboring subunits</note>
    </ligand>
</feature>
<feature type="binding site" description="in other chain" evidence="1">
    <location>
        <begin position="245"/>
        <end position="246"/>
    </location>
    <ligand>
        <name>ATP</name>
        <dbReference type="ChEBI" id="CHEBI:30616"/>
        <note>ligand shared between two neighboring subunits</note>
    </ligand>
</feature>
<feature type="binding site" evidence="1">
    <location>
        <position position="262"/>
    </location>
    <ligand>
        <name>ATP</name>
        <dbReference type="ChEBI" id="CHEBI:30616"/>
        <note>ligand shared between two neighboring subunits</note>
    </ligand>
</feature>
<feature type="binding site" evidence="1">
    <location>
        <position position="266"/>
    </location>
    <ligand>
        <name>ATP</name>
        <dbReference type="ChEBI" id="CHEBI:30616"/>
        <note>ligand shared between two neighboring subunits</note>
    </ligand>
</feature>
<feature type="binding site" description="in other chain" evidence="1">
    <location>
        <position position="270"/>
    </location>
    <ligand>
        <name>L-methionine</name>
        <dbReference type="ChEBI" id="CHEBI:57844"/>
        <note>ligand shared between two neighboring subunits</note>
    </ligand>
</feature>
<proteinExistence type="inferred from homology"/>
<accession>A6VMK8</accession>
<dbReference type="EC" id="2.5.1.6" evidence="1"/>
<dbReference type="EMBL" id="CP000746">
    <property type="protein sequence ID" value="ABR74205.1"/>
    <property type="molecule type" value="Genomic_DNA"/>
</dbReference>
<dbReference type="RefSeq" id="WP_012072583.1">
    <property type="nucleotide sequence ID" value="NC_009655.1"/>
</dbReference>
<dbReference type="SMR" id="A6VMK8"/>
<dbReference type="STRING" id="339671.Asuc_0835"/>
<dbReference type="KEGG" id="asu:Asuc_0835"/>
<dbReference type="eggNOG" id="COG0192">
    <property type="taxonomic scope" value="Bacteria"/>
</dbReference>
<dbReference type="HOGENOM" id="CLU_041802_1_1_6"/>
<dbReference type="OrthoDB" id="9801686at2"/>
<dbReference type="UniPathway" id="UPA00315">
    <property type="reaction ID" value="UER00080"/>
</dbReference>
<dbReference type="Proteomes" id="UP000001114">
    <property type="component" value="Chromosome"/>
</dbReference>
<dbReference type="GO" id="GO:0005737">
    <property type="term" value="C:cytoplasm"/>
    <property type="evidence" value="ECO:0007669"/>
    <property type="project" value="UniProtKB-SubCell"/>
</dbReference>
<dbReference type="GO" id="GO:0005524">
    <property type="term" value="F:ATP binding"/>
    <property type="evidence" value="ECO:0007669"/>
    <property type="project" value="UniProtKB-UniRule"/>
</dbReference>
<dbReference type="GO" id="GO:0000287">
    <property type="term" value="F:magnesium ion binding"/>
    <property type="evidence" value="ECO:0007669"/>
    <property type="project" value="UniProtKB-UniRule"/>
</dbReference>
<dbReference type="GO" id="GO:0004478">
    <property type="term" value="F:methionine adenosyltransferase activity"/>
    <property type="evidence" value="ECO:0007669"/>
    <property type="project" value="UniProtKB-UniRule"/>
</dbReference>
<dbReference type="GO" id="GO:0006730">
    <property type="term" value="P:one-carbon metabolic process"/>
    <property type="evidence" value="ECO:0007669"/>
    <property type="project" value="UniProtKB-KW"/>
</dbReference>
<dbReference type="GO" id="GO:0006556">
    <property type="term" value="P:S-adenosylmethionine biosynthetic process"/>
    <property type="evidence" value="ECO:0007669"/>
    <property type="project" value="UniProtKB-UniRule"/>
</dbReference>
<dbReference type="CDD" id="cd18079">
    <property type="entry name" value="S-AdoMet_synt"/>
    <property type="match status" value="1"/>
</dbReference>
<dbReference type="FunFam" id="3.30.300.10:FF:000003">
    <property type="entry name" value="S-adenosylmethionine synthase"/>
    <property type="match status" value="1"/>
</dbReference>
<dbReference type="Gene3D" id="3.30.300.10">
    <property type="match status" value="3"/>
</dbReference>
<dbReference type="HAMAP" id="MF_00086">
    <property type="entry name" value="S_AdoMet_synth1"/>
    <property type="match status" value="1"/>
</dbReference>
<dbReference type="InterPro" id="IPR022631">
    <property type="entry name" value="ADOMET_SYNTHASE_CS"/>
</dbReference>
<dbReference type="InterPro" id="IPR022630">
    <property type="entry name" value="S-AdoMet_synt_C"/>
</dbReference>
<dbReference type="InterPro" id="IPR022629">
    <property type="entry name" value="S-AdoMet_synt_central"/>
</dbReference>
<dbReference type="InterPro" id="IPR022628">
    <property type="entry name" value="S-AdoMet_synt_N"/>
</dbReference>
<dbReference type="InterPro" id="IPR002133">
    <property type="entry name" value="S-AdoMet_synthetase"/>
</dbReference>
<dbReference type="InterPro" id="IPR022636">
    <property type="entry name" value="S-AdoMet_synthetase_sfam"/>
</dbReference>
<dbReference type="NCBIfam" id="TIGR01034">
    <property type="entry name" value="metK"/>
    <property type="match status" value="1"/>
</dbReference>
<dbReference type="PANTHER" id="PTHR11964">
    <property type="entry name" value="S-ADENOSYLMETHIONINE SYNTHETASE"/>
    <property type="match status" value="1"/>
</dbReference>
<dbReference type="Pfam" id="PF02773">
    <property type="entry name" value="S-AdoMet_synt_C"/>
    <property type="match status" value="1"/>
</dbReference>
<dbReference type="Pfam" id="PF02772">
    <property type="entry name" value="S-AdoMet_synt_M"/>
    <property type="match status" value="1"/>
</dbReference>
<dbReference type="Pfam" id="PF00438">
    <property type="entry name" value="S-AdoMet_synt_N"/>
    <property type="match status" value="1"/>
</dbReference>
<dbReference type="PIRSF" id="PIRSF000497">
    <property type="entry name" value="MAT"/>
    <property type="match status" value="1"/>
</dbReference>
<dbReference type="SUPFAM" id="SSF55973">
    <property type="entry name" value="S-adenosylmethionine synthetase"/>
    <property type="match status" value="3"/>
</dbReference>
<dbReference type="PROSITE" id="PS00376">
    <property type="entry name" value="ADOMET_SYNTHASE_1"/>
    <property type="match status" value="1"/>
</dbReference>
<dbReference type="PROSITE" id="PS00377">
    <property type="entry name" value="ADOMET_SYNTHASE_2"/>
    <property type="match status" value="1"/>
</dbReference>
<organism>
    <name type="scientific">Actinobacillus succinogenes (strain ATCC 55618 / DSM 22257 / CCUG 43843 / 130Z)</name>
    <dbReference type="NCBI Taxonomy" id="339671"/>
    <lineage>
        <taxon>Bacteria</taxon>
        <taxon>Pseudomonadati</taxon>
        <taxon>Pseudomonadota</taxon>
        <taxon>Gammaproteobacteria</taxon>
        <taxon>Pasteurellales</taxon>
        <taxon>Pasteurellaceae</taxon>
        <taxon>Actinobacillus</taxon>
    </lineage>
</organism>